<dbReference type="EC" id="6.3.5.-" evidence="1"/>
<dbReference type="EMBL" id="CP000348">
    <property type="protein sequence ID" value="ABJ77899.1"/>
    <property type="molecule type" value="Genomic_DNA"/>
</dbReference>
<dbReference type="RefSeq" id="WP_011669338.1">
    <property type="nucleotide sequence ID" value="NC_008508.1"/>
</dbReference>
<dbReference type="SMR" id="Q055U6"/>
<dbReference type="KEGG" id="lbl:LBL_0287"/>
<dbReference type="HOGENOM" id="CLU_019240_0_0_12"/>
<dbReference type="GO" id="GO:0050566">
    <property type="term" value="F:asparaginyl-tRNA synthase (glutamine-hydrolyzing) activity"/>
    <property type="evidence" value="ECO:0007669"/>
    <property type="project" value="RHEA"/>
</dbReference>
<dbReference type="GO" id="GO:0005524">
    <property type="term" value="F:ATP binding"/>
    <property type="evidence" value="ECO:0007669"/>
    <property type="project" value="UniProtKB-KW"/>
</dbReference>
<dbReference type="GO" id="GO:0050567">
    <property type="term" value="F:glutaminyl-tRNA synthase (glutamine-hydrolyzing) activity"/>
    <property type="evidence" value="ECO:0007669"/>
    <property type="project" value="UniProtKB-UniRule"/>
</dbReference>
<dbReference type="GO" id="GO:0070681">
    <property type="term" value="P:glutaminyl-tRNAGln biosynthesis via transamidation"/>
    <property type="evidence" value="ECO:0007669"/>
    <property type="project" value="TreeGrafter"/>
</dbReference>
<dbReference type="GO" id="GO:0006412">
    <property type="term" value="P:translation"/>
    <property type="evidence" value="ECO:0007669"/>
    <property type="project" value="UniProtKB-UniRule"/>
</dbReference>
<dbReference type="FunFam" id="1.10.10.410:FF:000001">
    <property type="entry name" value="Aspartyl/glutamyl-tRNA(Asn/Gln) amidotransferase subunit B"/>
    <property type="match status" value="1"/>
</dbReference>
<dbReference type="FunFam" id="1.10.150.380:FF:000003">
    <property type="entry name" value="Aspartyl/glutamyl-tRNA(Asn/Gln) amidotransferase subunit B"/>
    <property type="match status" value="1"/>
</dbReference>
<dbReference type="Gene3D" id="1.10.10.410">
    <property type="match status" value="1"/>
</dbReference>
<dbReference type="Gene3D" id="1.10.150.380">
    <property type="entry name" value="GatB domain, N-terminal subdomain"/>
    <property type="match status" value="1"/>
</dbReference>
<dbReference type="HAMAP" id="MF_00121">
    <property type="entry name" value="GatB"/>
    <property type="match status" value="1"/>
</dbReference>
<dbReference type="InterPro" id="IPR017959">
    <property type="entry name" value="Asn/Gln-tRNA_amidoTrfase_suB/E"/>
</dbReference>
<dbReference type="InterPro" id="IPR006075">
    <property type="entry name" value="Asn/Gln-tRNA_Trfase_suB/E_cat"/>
</dbReference>
<dbReference type="InterPro" id="IPR018027">
    <property type="entry name" value="Asn/Gln_amidotransferase"/>
</dbReference>
<dbReference type="InterPro" id="IPR003789">
    <property type="entry name" value="Asn/Gln_tRNA_amidoTrase-B-like"/>
</dbReference>
<dbReference type="InterPro" id="IPR004413">
    <property type="entry name" value="GatB"/>
</dbReference>
<dbReference type="InterPro" id="IPR042114">
    <property type="entry name" value="GatB_C_1"/>
</dbReference>
<dbReference type="InterPro" id="IPR023168">
    <property type="entry name" value="GatB_Yqey_C_2"/>
</dbReference>
<dbReference type="InterPro" id="IPR017958">
    <property type="entry name" value="Gln-tRNA_amidoTrfase_suB_CS"/>
</dbReference>
<dbReference type="InterPro" id="IPR014746">
    <property type="entry name" value="Gln_synth/guanido_kin_cat_dom"/>
</dbReference>
<dbReference type="NCBIfam" id="TIGR00133">
    <property type="entry name" value="gatB"/>
    <property type="match status" value="1"/>
</dbReference>
<dbReference type="NCBIfam" id="NF004012">
    <property type="entry name" value="PRK05477.1-2"/>
    <property type="match status" value="1"/>
</dbReference>
<dbReference type="NCBIfam" id="NF004014">
    <property type="entry name" value="PRK05477.1-4"/>
    <property type="match status" value="1"/>
</dbReference>
<dbReference type="PANTHER" id="PTHR11659">
    <property type="entry name" value="GLUTAMYL-TRNA GLN AMIDOTRANSFERASE SUBUNIT B MITOCHONDRIAL AND PROKARYOTIC PET112-RELATED"/>
    <property type="match status" value="1"/>
</dbReference>
<dbReference type="PANTHER" id="PTHR11659:SF0">
    <property type="entry name" value="GLUTAMYL-TRNA(GLN) AMIDOTRANSFERASE SUBUNIT B, MITOCHONDRIAL"/>
    <property type="match status" value="1"/>
</dbReference>
<dbReference type="Pfam" id="PF02934">
    <property type="entry name" value="GatB_N"/>
    <property type="match status" value="1"/>
</dbReference>
<dbReference type="Pfam" id="PF02637">
    <property type="entry name" value="GatB_Yqey"/>
    <property type="match status" value="1"/>
</dbReference>
<dbReference type="SMART" id="SM00845">
    <property type="entry name" value="GatB_Yqey"/>
    <property type="match status" value="1"/>
</dbReference>
<dbReference type="SUPFAM" id="SSF89095">
    <property type="entry name" value="GatB/YqeY motif"/>
    <property type="match status" value="1"/>
</dbReference>
<dbReference type="SUPFAM" id="SSF55931">
    <property type="entry name" value="Glutamine synthetase/guanido kinase"/>
    <property type="match status" value="1"/>
</dbReference>
<dbReference type="PROSITE" id="PS01234">
    <property type="entry name" value="GATB"/>
    <property type="match status" value="1"/>
</dbReference>
<organism>
    <name type="scientific">Leptospira borgpetersenii serovar Hardjo-bovis (strain L550)</name>
    <dbReference type="NCBI Taxonomy" id="355276"/>
    <lineage>
        <taxon>Bacteria</taxon>
        <taxon>Pseudomonadati</taxon>
        <taxon>Spirochaetota</taxon>
        <taxon>Spirochaetia</taxon>
        <taxon>Leptospirales</taxon>
        <taxon>Leptospiraceae</taxon>
        <taxon>Leptospira</taxon>
    </lineage>
</organism>
<keyword id="KW-0067">ATP-binding</keyword>
<keyword id="KW-0436">Ligase</keyword>
<keyword id="KW-0547">Nucleotide-binding</keyword>
<keyword id="KW-0648">Protein biosynthesis</keyword>
<evidence type="ECO:0000255" key="1">
    <source>
        <dbReference type="HAMAP-Rule" id="MF_00121"/>
    </source>
</evidence>
<comment type="function">
    <text evidence="1">Allows the formation of correctly charged Asn-tRNA(Asn) or Gln-tRNA(Gln) through the transamidation of misacylated Asp-tRNA(Asn) or Glu-tRNA(Gln) in organisms which lack either or both of asparaginyl-tRNA or glutaminyl-tRNA synthetases. The reaction takes place in the presence of glutamine and ATP through an activated phospho-Asp-tRNA(Asn) or phospho-Glu-tRNA(Gln).</text>
</comment>
<comment type="catalytic activity">
    <reaction evidence="1">
        <text>L-glutamyl-tRNA(Gln) + L-glutamine + ATP + H2O = L-glutaminyl-tRNA(Gln) + L-glutamate + ADP + phosphate + H(+)</text>
        <dbReference type="Rhea" id="RHEA:17521"/>
        <dbReference type="Rhea" id="RHEA-COMP:9681"/>
        <dbReference type="Rhea" id="RHEA-COMP:9684"/>
        <dbReference type="ChEBI" id="CHEBI:15377"/>
        <dbReference type="ChEBI" id="CHEBI:15378"/>
        <dbReference type="ChEBI" id="CHEBI:29985"/>
        <dbReference type="ChEBI" id="CHEBI:30616"/>
        <dbReference type="ChEBI" id="CHEBI:43474"/>
        <dbReference type="ChEBI" id="CHEBI:58359"/>
        <dbReference type="ChEBI" id="CHEBI:78520"/>
        <dbReference type="ChEBI" id="CHEBI:78521"/>
        <dbReference type="ChEBI" id="CHEBI:456216"/>
    </reaction>
</comment>
<comment type="catalytic activity">
    <reaction evidence="1">
        <text>L-aspartyl-tRNA(Asn) + L-glutamine + ATP + H2O = L-asparaginyl-tRNA(Asn) + L-glutamate + ADP + phosphate + 2 H(+)</text>
        <dbReference type="Rhea" id="RHEA:14513"/>
        <dbReference type="Rhea" id="RHEA-COMP:9674"/>
        <dbReference type="Rhea" id="RHEA-COMP:9677"/>
        <dbReference type="ChEBI" id="CHEBI:15377"/>
        <dbReference type="ChEBI" id="CHEBI:15378"/>
        <dbReference type="ChEBI" id="CHEBI:29985"/>
        <dbReference type="ChEBI" id="CHEBI:30616"/>
        <dbReference type="ChEBI" id="CHEBI:43474"/>
        <dbReference type="ChEBI" id="CHEBI:58359"/>
        <dbReference type="ChEBI" id="CHEBI:78515"/>
        <dbReference type="ChEBI" id="CHEBI:78516"/>
        <dbReference type="ChEBI" id="CHEBI:456216"/>
    </reaction>
</comment>
<comment type="subunit">
    <text evidence="1">Heterotrimer of A, B and C subunits.</text>
</comment>
<comment type="similarity">
    <text evidence="1">Belongs to the GatB/GatE family. GatB subfamily.</text>
</comment>
<name>GATB_LEPBL</name>
<proteinExistence type="inferred from homology"/>
<protein>
    <recommendedName>
        <fullName evidence="1">Aspartyl/glutamyl-tRNA(Asn/Gln) amidotransferase subunit B</fullName>
        <shortName evidence="1">Asp/Glu-ADT subunit B</shortName>
        <ecNumber evidence="1">6.3.5.-</ecNumber>
    </recommendedName>
</protein>
<accession>Q055U6</accession>
<feature type="chain" id="PRO_1000015987" description="Aspartyl/glutamyl-tRNA(Asn/Gln) amidotransferase subunit B">
    <location>
        <begin position="1"/>
        <end position="486"/>
    </location>
</feature>
<reference key="1">
    <citation type="journal article" date="2006" name="Proc. Natl. Acad. Sci. U.S.A.">
        <title>Genome reduction in Leptospira borgpetersenii reflects limited transmission potential.</title>
        <authorList>
            <person name="Bulach D.M."/>
            <person name="Zuerner R.L."/>
            <person name="Wilson P."/>
            <person name="Seemann T."/>
            <person name="McGrath A."/>
            <person name="Cullen P.A."/>
            <person name="Davis J."/>
            <person name="Johnson M."/>
            <person name="Kuczek E."/>
            <person name="Alt D.P."/>
            <person name="Peterson-Burch B."/>
            <person name="Coppel R.L."/>
            <person name="Rood J.I."/>
            <person name="Davies J.K."/>
            <person name="Adler B."/>
        </authorList>
    </citation>
    <scope>NUCLEOTIDE SEQUENCE [LARGE SCALE GENOMIC DNA]</scope>
    <source>
        <strain>L550</strain>
    </source>
</reference>
<sequence>MAEFETIIGLEVHAQLNTESKIFSTSATKFGSPPNSQTNPVCLGLPGALPVLNESALEKAIMAGIAFGCDISLFTKFDRKNYFYPDLPKGYQISQFDKPICTGGGVTFTIKGEESSRYVRLTRIHMEEDAGKLIHSADPNIPQSYVDLNRAGTPLIEIVSEPDMRSSDEAYYYLNSLKSILKYIRVSDCNMEEGSLRCDANVSIRPKGSDKFGTRVEIKNLNSFKAVKAAIDYEVEWQTEMALEGKTFQQQTKLWDSVANKTVTMRTKEMSHDYRYFPDPDLPVIILQKETVESVRSKLPELPNERKNRFVEKLGLPKYDAEVLTAEREIADYFEDALKVSGDAKKTSNWVKDEVLGVVNKESITISEFSVSAQRIGGLVKLIADGKISGKIAKTVFEELLISDKDAETIVTEKNLIVVRDDKEIERIVNEAIANNQDAVAKYKSGKDRALGAIVGYVMKVSKGKADPELVNQMLLDKLGSLPPKE</sequence>
<gene>
    <name evidence="1" type="primary">gatB</name>
    <name type="ordered locus">LBL_0287</name>
</gene>